<keyword id="KW-1003">Cell membrane</keyword>
<keyword id="KW-0472">Membrane</keyword>
<keyword id="KW-1185">Reference proteome</keyword>
<keyword id="KW-0812">Transmembrane</keyword>
<keyword id="KW-1133">Transmembrane helix</keyword>
<feature type="chain" id="PRO_0000318629" description="Flotillin-like protein FloA">
    <location>
        <begin position="1"/>
        <end position="330"/>
    </location>
</feature>
<feature type="transmembrane region" description="Helical" evidence="1">
    <location>
        <begin position="5"/>
        <end position="25"/>
    </location>
</feature>
<feature type="transmembrane region" description="Helical" evidence="1">
    <location>
        <begin position="27"/>
        <end position="47"/>
    </location>
</feature>
<accession>A6LDT3</accession>
<gene>
    <name evidence="1" type="primary">floA</name>
    <name type="ordered locus">BDI_2116</name>
</gene>
<protein>
    <recommendedName>
        <fullName evidence="1">Flotillin-like protein FloA</fullName>
    </recommendedName>
</protein>
<dbReference type="EMBL" id="CP000140">
    <property type="protein sequence ID" value="ABR43847.1"/>
    <property type="molecule type" value="Genomic_DNA"/>
</dbReference>
<dbReference type="RefSeq" id="WP_008780036.1">
    <property type="nucleotide sequence ID" value="NC_009615.1"/>
</dbReference>
<dbReference type="SMR" id="A6LDT3"/>
<dbReference type="STRING" id="435591.BDI_2116"/>
<dbReference type="PaxDb" id="435591-BDI_2116"/>
<dbReference type="DNASU" id="5307265"/>
<dbReference type="GeneID" id="93522101"/>
<dbReference type="KEGG" id="pdi:BDI_2116"/>
<dbReference type="eggNOG" id="COG4864">
    <property type="taxonomic scope" value="Bacteria"/>
</dbReference>
<dbReference type="HOGENOM" id="CLU_836378_0_0_10"/>
<dbReference type="BioCyc" id="PDIS435591:G1G5A-2170-MONOMER"/>
<dbReference type="Proteomes" id="UP000000566">
    <property type="component" value="Chromosome"/>
</dbReference>
<dbReference type="GO" id="GO:0045121">
    <property type="term" value="C:membrane raft"/>
    <property type="evidence" value="ECO:0007669"/>
    <property type="project" value="UniProtKB-SubCell"/>
</dbReference>
<dbReference type="GO" id="GO:0005886">
    <property type="term" value="C:plasma membrane"/>
    <property type="evidence" value="ECO:0007669"/>
    <property type="project" value="UniProtKB-SubCell"/>
</dbReference>
<dbReference type="HAMAP" id="MF_01562">
    <property type="entry name" value="FloA"/>
    <property type="match status" value="1"/>
</dbReference>
<dbReference type="InterPro" id="IPR022853">
    <property type="entry name" value="FloA"/>
</dbReference>
<dbReference type="NCBIfam" id="NF010186">
    <property type="entry name" value="PRK13665.1"/>
    <property type="match status" value="1"/>
</dbReference>
<dbReference type="Pfam" id="PF12127">
    <property type="entry name" value="FloA"/>
    <property type="match status" value="1"/>
</dbReference>
<evidence type="ECO:0000255" key="1">
    <source>
        <dbReference type="HAMAP-Rule" id="MF_01562"/>
    </source>
</evidence>
<organism>
    <name type="scientific">Parabacteroides distasonis (strain ATCC 8503 / DSM 20701 / CIP 104284 / JCM 5825 / NCTC 11152)</name>
    <dbReference type="NCBI Taxonomy" id="435591"/>
    <lineage>
        <taxon>Bacteria</taxon>
        <taxon>Pseudomonadati</taxon>
        <taxon>Bacteroidota</taxon>
        <taxon>Bacteroidia</taxon>
        <taxon>Bacteroidales</taxon>
        <taxon>Tannerellaceae</taxon>
        <taxon>Parabacteroides</taxon>
    </lineage>
</organism>
<proteinExistence type="inferred from homology"/>
<sequence>MEITFLPLILLGAAVLLLAIFFYYVPFLLWISAKVSGVNISLIQLFLMRIRKVPPYIITRAMIEAHKAGIKTLTRDELEAHYLAGGHVEKVVHALVSASKANIDLPFQMATAIDLAGRDVFEAVQMSVNPKVIDTPPVTAVAKDGIQLIAKARVTVRANIKQLVGGAGEETILARVGEGIVSSIGSSESHKTVLENPDSISKLVLRKGLDAGTAFEILSIDIADIDIGKNIGAFLQMDQAQADKNIAQAKAEERRAMAVALEQEMKAKAQEARAKVIEAEAEVPKAMADAFRTGNLGVMDYYKMKNIEADTSMREAIAKPTGAPSKPLKD</sequence>
<name>FLOA_PARD8</name>
<comment type="function">
    <text evidence="1">Found in functional membrane microdomains (FMM) that may be equivalent to eukaryotic membrane rafts. FMMs are highly dynamic and increase in number as cells age. Flotillins are thought to be important factors in membrane fluidity.</text>
</comment>
<comment type="subunit">
    <text evidence="1">Homooligomerizes.</text>
</comment>
<comment type="subcellular location">
    <subcellularLocation>
        <location evidence="1">Cell membrane</location>
        <topology evidence="1">Multi-pass membrane protein</topology>
    </subcellularLocation>
    <subcellularLocation>
        <location evidence="1">Membrane raft</location>
        <topology evidence="1">Multi-pass membrane protein</topology>
    </subcellularLocation>
</comment>
<comment type="similarity">
    <text evidence="1">Belongs to the flotillin-like FloA family.</text>
</comment>
<reference key="1">
    <citation type="journal article" date="2007" name="PLoS Biol.">
        <title>Evolution of symbiotic bacteria in the distal human intestine.</title>
        <authorList>
            <person name="Xu J."/>
            <person name="Mahowald M.A."/>
            <person name="Ley R.E."/>
            <person name="Lozupone C.A."/>
            <person name="Hamady M."/>
            <person name="Martens E.C."/>
            <person name="Henrissat B."/>
            <person name="Coutinho P.M."/>
            <person name="Minx P."/>
            <person name="Latreille P."/>
            <person name="Cordum H."/>
            <person name="Van Brunt A."/>
            <person name="Kim K."/>
            <person name="Fulton R.S."/>
            <person name="Fulton L.A."/>
            <person name="Clifton S.W."/>
            <person name="Wilson R.K."/>
            <person name="Knight R.D."/>
            <person name="Gordon J.I."/>
        </authorList>
    </citation>
    <scope>NUCLEOTIDE SEQUENCE [LARGE SCALE GENOMIC DNA]</scope>
    <source>
        <strain>ATCC 8503 / DSM 20701 / CIP 104284 / JCM 5825 / NCTC 11152</strain>
    </source>
</reference>